<sequence length="346" mass="38476">MTMNNPNLTMIARNWRDLIRPKGISIDAESGTQFYAKFTCEPLERGFGITIGNSLRRVLLSSLQGAAATAIRIEGALHEFTTVPDVVEDVSDIILNVKEVVFKAATPKTYSVRIDREGPGPVYARDIQLVEGLSVLNPDHLIAVLDKKGPLSMELTVNVGRGYVPAERNKTPTMPIGTIPIDALFSPIRKVNYTVQNARVGQVTDYDKLTLEVWTNGSVSPADAVAFAAKILKEQLSIWVNFEESEETSYQAVMSDDEPLNENLFRSVEELELSVRSANCLQNANITLIGELVQRTEQDMLKTKNFGRKSLKEIKEILANMGLSLGMKIDNWPQLLERWKAQQAQA</sequence>
<proteinExistence type="inferred from homology"/>
<gene>
    <name evidence="1" type="primary">rpoA</name>
    <name type="ordered locus">sce7936</name>
</gene>
<protein>
    <recommendedName>
        <fullName evidence="1">DNA-directed RNA polymerase subunit alpha</fullName>
        <shortName evidence="1">RNAP subunit alpha</shortName>
        <ecNumber evidence="1">2.7.7.6</ecNumber>
    </recommendedName>
    <alternativeName>
        <fullName evidence="1">RNA polymerase subunit alpha</fullName>
    </alternativeName>
    <alternativeName>
        <fullName evidence="1">Transcriptase subunit alpha</fullName>
    </alternativeName>
</protein>
<keyword id="KW-0240">DNA-directed RNA polymerase</keyword>
<keyword id="KW-0548">Nucleotidyltransferase</keyword>
<keyword id="KW-1185">Reference proteome</keyword>
<keyword id="KW-0804">Transcription</keyword>
<keyword id="KW-0808">Transferase</keyword>
<evidence type="ECO:0000255" key="1">
    <source>
        <dbReference type="HAMAP-Rule" id="MF_00059"/>
    </source>
</evidence>
<organism>
    <name type="scientific">Sorangium cellulosum (strain So ce56)</name>
    <name type="common">Polyangium cellulosum (strain So ce56)</name>
    <dbReference type="NCBI Taxonomy" id="448385"/>
    <lineage>
        <taxon>Bacteria</taxon>
        <taxon>Pseudomonadati</taxon>
        <taxon>Myxococcota</taxon>
        <taxon>Polyangia</taxon>
        <taxon>Polyangiales</taxon>
        <taxon>Polyangiaceae</taxon>
        <taxon>Sorangium</taxon>
    </lineage>
</organism>
<accession>A9FGB8</accession>
<name>RPOA_SORC5</name>
<feature type="chain" id="PRO_1000091967" description="DNA-directed RNA polymerase subunit alpha">
    <location>
        <begin position="1"/>
        <end position="346"/>
    </location>
</feature>
<feature type="region of interest" description="Alpha N-terminal domain (alpha-NTD)" evidence="1">
    <location>
        <begin position="1"/>
        <end position="243"/>
    </location>
</feature>
<feature type="region of interest" description="Alpha C-terminal domain (alpha-CTD)" evidence="1">
    <location>
        <begin position="260"/>
        <end position="346"/>
    </location>
</feature>
<reference key="1">
    <citation type="journal article" date="2007" name="Nat. Biotechnol.">
        <title>Complete genome sequence of the myxobacterium Sorangium cellulosum.</title>
        <authorList>
            <person name="Schneiker S."/>
            <person name="Perlova O."/>
            <person name="Kaiser O."/>
            <person name="Gerth K."/>
            <person name="Alici A."/>
            <person name="Altmeyer M.O."/>
            <person name="Bartels D."/>
            <person name="Bekel T."/>
            <person name="Beyer S."/>
            <person name="Bode E."/>
            <person name="Bode H.B."/>
            <person name="Bolten C.J."/>
            <person name="Choudhuri J.V."/>
            <person name="Doss S."/>
            <person name="Elnakady Y.A."/>
            <person name="Frank B."/>
            <person name="Gaigalat L."/>
            <person name="Goesmann A."/>
            <person name="Groeger C."/>
            <person name="Gross F."/>
            <person name="Jelsbak L."/>
            <person name="Jelsbak L."/>
            <person name="Kalinowski J."/>
            <person name="Kegler C."/>
            <person name="Knauber T."/>
            <person name="Konietzny S."/>
            <person name="Kopp M."/>
            <person name="Krause L."/>
            <person name="Krug D."/>
            <person name="Linke B."/>
            <person name="Mahmud T."/>
            <person name="Martinez-Arias R."/>
            <person name="McHardy A.C."/>
            <person name="Merai M."/>
            <person name="Meyer F."/>
            <person name="Mormann S."/>
            <person name="Munoz-Dorado J."/>
            <person name="Perez J."/>
            <person name="Pradella S."/>
            <person name="Rachid S."/>
            <person name="Raddatz G."/>
            <person name="Rosenau F."/>
            <person name="Rueckert C."/>
            <person name="Sasse F."/>
            <person name="Scharfe M."/>
            <person name="Schuster S.C."/>
            <person name="Suen G."/>
            <person name="Treuner-Lange A."/>
            <person name="Velicer G.J."/>
            <person name="Vorholter F.-J."/>
            <person name="Weissman K.J."/>
            <person name="Welch R.D."/>
            <person name="Wenzel S.C."/>
            <person name="Whitworth D.E."/>
            <person name="Wilhelm S."/>
            <person name="Wittmann C."/>
            <person name="Bloecker H."/>
            <person name="Puehler A."/>
            <person name="Mueller R."/>
        </authorList>
    </citation>
    <scope>NUCLEOTIDE SEQUENCE [LARGE SCALE GENOMIC DNA]</scope>
    <source>
        <strain>So ce56</strain>
    </source>
</reference>
<dbReference type="EC" id="2.7.7.6" evidence="1"/>
<dbReference type="EMBL" id="AM746676">
    <property type="protein sequence ID" value="CAN98106.1"/>
    <property type="molecule type" value="Genomic_DNA"/>
</dbReference>
<dbReference type="SMR" id="A9FGB8"/>
<dbReference type="STRING" id="448385.sce7936"/>
<dbReference type="KEGG" id="scl:sce7936"/>
<dbReference type="eggNOG" id="COG0202">
    <property type="taxonomic scope" value="Bacteria"/>
</dbReference>
<dbReference type="HOGENOM" id="CLU_053084_0_1_7"/>
<dbReference type="OrthoDB" id="9805706at2"/>
<dbReference type="BioCyc" id="SCEL448385:SCE_RS40625-MONOMER"/>
<dbReference type="Proteomes" id="UP000002139">
    <property type="component" value="Chromosome"/>
</dbReference>
<dbReference type="GO" id="GO:0005737">
    <property type="term" value="C:cytoplasm"/>
    <property type="evidence" value="ECO:0007669"/>
    <property type="project" value="UniProtKB-ARBA"/>
</dbReference>
<dbReference type="GO" id="GO:0000428">
    <property type="term" value="C:DNA-directed RNA polymerase complex"/>
    <property type="evidence" value="ECO:0007669"/>
    <property type="project" value="UniProtKB-KW"/>
</dbReference>
<dbReference type="GO" id="GO:0003677">
    <property type="term" value="F:DNA binding"/>
    <property type="evidence" value="ECO:0007669"/>
    <property type="project" value="UniProtKB-UniRule"/>
</dbReference>
<dbReference type="GO" id="GO:0003899">
    <property type="term" value="F:DNA-directed RNA polymerase activity"/>
    <property type="evidence" value="ECO:0007669"/>
    <property type="project" value="UniProtKB-UniRule"/>
</dbReference>
<dbReference type="GO" id="GO:0046983">
    <property type="term" value="F:protein dimerization activity"/>
    <property type="evidence" value="ECO:0007669"/>
    <property type="project" value="InterPro"/>
</dbReference>
<dbReference type="GO" id="GO:0006351">
    <property type="term" value="P:DNA-templated transcription"/>
    <property type="evidence" value="ECO:0007669"/>
    <property type="project" value="UniProtKB-UniRule"/>
</dbReference>
<dbReference type="CDD" id="cd06928">
    <property type="entry name" value="RNAP_alpha_NTD"/>
    <property type="match status" value="1"/>
</dbReference>
<dbReference type="FunFam" id="1.10.150.20:FF:000001">
    <property type="entry name" value="DNA-directed RNA polymerase subunit alpha"/>
    <property type="match status" value="1"/>
</dbReference>
<dbReference type="FunFam" id="2.170.120.12:FF:000001">
    <property type="entry name" value="DNA-directed RNA polymerase subunit alpha"/>
    <property type="match status" value="1"/>
</dbReference>
<dbReference type="Gene3D" id="1.10.150.20">
    <property type="entry name" value="5' to 3' exonuclease, C-terminal subdomain"/>
    <property type="match status" value="1"/>
</dbReference>
<dbReference type="Gene3D" id="2.170.120.12">
    <property type="entry name" value="DNA-directed RNA polymerase, insert domain"/>
    <property type="match status" value="1"/>
</dbReference>
<dbReference type="Gene3D" id="3.30.1360.10">
    <property type="entry name" value="RNA polymerase, RBP11-like subunit"/>
    <property type="match status" value="1"/>
</dbReference>
<dbReference type="HAMAP" id="MF_00059">
    <property type="entry name" value="RNApol_bact_RpoA"/>
    <property type="match status" value="1"/>
</dbReference>
<dbReference type="InterPro" id="IPR011262">
    <property type="entry name" value="DNA-dir_RNA_pol_insert"/>
</dbReference>
<dbReference type="InterPro" id="IPR011263">
    <property type="entry name" value="DNA-dir_RNA_pol_RpoA/D/Rpb3"/>
</dbReference>
<dbReference type="InterPro" id="IPR011773">
    <property type="entry name" value="DNA-dir_RpoA"/>
</dbReference>
<dbReference type="InterPro" id="IPR036603">
    <property type="entry name" value="RBP11-like"/>
</dbReference>
<dbReference type="InterPro" id="IPR011260">
    <property type="entry name" value="RNAP_asu_C"/>
</dbReference>
<dbReference type="InterPro" id="IPR036643">
    <property type="entry name" value="RNApol_insert_sf"/>
</dbReference>
<dbReference type="NCBIfam" id="NF003513">
    <property type="entry name" value="PRK05182.1-2"/>
    <property type="match status" value="1"/>
</dbReference>
<dbReference type="NCBIfam" id="NF003519">
    <property type="entry name" value="PRK05182.2-5"/>
    <property type="match status" value="1"/>
</dbReference>
<dbReference type="NCBIfam" id="TIGR02027">
    <property type="entry name" value="rpoA"/>
    <property type="match status" value="1"/>
</dbReference>
<dbReference type="Pfam" id="PF01000">
    <property type="entry name" value="RNA_pol_A_bac"/>
    <property type="match status" value="1"/>
</dbReference>
<dbReference type="Pfam" id="PF03118">
    <property type="entry name" value="RNA_pol_A_CTD"/>
    <property type="match status" value="1"/>
</dbReference>
<dbReference type="Pfam" id="PF01193">
    <property type="entry name" value="RNA_pol_L"/>
    <property type="match status" value="1"/>
</dbReference>
<dbReference type="SMART" id="SM00662">
    <property type="entry name" value="RPOLD"/>
    <property type="match status" value="1"/>
</dbReference>
<dbReference type="SUPFAM" id="SSF47789">
    <property type="entry name" value="C-terminal domain of RNA polymerase alpha subunit"/>
    <property type="match status" value="1"/>
</dbReference>
<dbReference type="SUPFAM" id="SSF56553">
    <property type="entry name" value="Insert subdomain of RNA polymerase alpha subunit"/>
    <property type="match status" value="1"/>
</dbReference>
<dbReference type="SUPFAM" id="SSF55257">
    <property type="entry name" value="RBP11-like subunits of RNA polymerase"/>
    <property type="match status" value="1"/>
</dbReference>
<comment type="function">
    <text evidence="1">DNA-dependent RNA polymerase catalyzes the transcription of DNA into RNA using the four ribonucleoside triphosphates as substrates.</text>
</comment>
<comment type="catalytic activity">
    <reaction evidence="1">
        <text>RNA(n) + a ribonucleoside 5'-triphosphate = RNA(n+1) + diphosphate</text>
        <dbReference type="Rhea" id="RHEA:21248"/>
        <dbReference type="Rhea" id="RHEA-COMP:14527"/>
        <dbReference type="Rhea" id="RHEA-COMP:17342"/>
        <dbReference type="ChEBI" id="CHEBI:33019"/>
        <dbReference type="ChEBI" id="CHEBI:61557"/>
        <dbReference type="ChEBI" id="CHEBI:140395"/>
        <dbReference type="EC" id="2.7.7.6"/>
    </reaction>
</comment>
<comment type="subunit">
    <text evidence="1">Homodimer. The RNAP catalytic core consists of 2 alpha, 1 beta, 1 beta' and 1 omega subunit. When a sigma factor is associated with the core the holoenzyme is formed, which can initiate transcription.</text>
</comment>
<comment type="domain">
    <text evidence="1">The N-terminal domain is essential for RNAP assembly and basal transcription, whereas the C-terminal domain is involved in interaction with transcriptional regulators and with upstream promoter elements.</text>
</comment>
<comment type="similarity">
    <text evidence="1">Belongs to the RNA polymerase alpha chain family.</text>
</comment>